<comment type="function">
    <text evidence="1">Carrier of the growing fatty acid chain in fatty acid biosynthesis.</text>
</comment>
<comment type="pathway">
    <text evidence="1">Lipid metabolism; fatty acid biosynthesis.</text>
</comment>
<comment type="subcellular location">
    <subcellularLocation>
        <location evidence="1">Cytoplasm</location>
    </subcellularLocation>
</comment>
<comment type="PTM">
    <text evidence="1">4'-phosphopantetheine is transferred from CoA to a specific serine of apo-ACP by AcpS. This modification is essential for activity because fatty acids are bound in thioester linkage to the sulfhydryl of the prosthetic group.</text>
</comment>
<comment type="similarity">
    <text evidence="1">Belongs to the acyl carrier protein (ACP) family.</text>
</comment>
<sequence length="77" mass="8549">MENFDKVKDIIVDRLGVDADKVTEDASFKDDLGADSLDIAELVMELEDEFGTEIPDEEAEKINTVGDAVKFINSLEK</sequence>
<reference key="1">
    <citation type="journal article" date="2008" name="Antimicrob. Agents Chemother.">
        <title>Mutated response regulator graR is responsible for phenotypic conversion of Staphylococcus aureus from heterogeneous vancomycin-intermediate resistance to vancomycin-intermediate resistance.</title>
        <authorList>
            <person name="Neoh H.-M."/>
            <person name="Cui L."/>
            <person name="Yuzawa H."/>
            <person name="Takeuchi F."/>
            <person name="Matsuo M."/>
            <person name="Hiramatsu K."/>
        </authorList>
    </citation>
    <scope>NUCLEOTIDE SEQUENCE [LARGE SCALE GENOMIC DNA]</scope>
    <source>
        <strain>Mu3 / ATCC 700698</strain>
    </source>
</reference>
<protein>
    <recommendedName>
        <fullName evidence="1">Acyl carrier protein</fullName>
        <shortName evidence="1">ACP</shortName>
    </recommendedName>
</protein>
<dbReference type="EMBL" id="AP009324">
    <property type="protein sequence ID" value="BAF78105.1"/>
    <property type="molecule type" value="Genomic_DNA"/>
</dbReference>
<dbReference type="RefSeq" id="WP_000426914.1">
    <property type="nucleotide sequence ID" value="NZ_CTYB01000004.1"/>
</dbReference>
<dbReference type="SMR" id="A7X1J8"/>
<dbReference type="KEGG" id="saw:SAHV_1222"/>
<dbReference type="HOGENOM" id="CLU_108696_5_1_9"/>
<dbReference type="UniPathway" id="UPA00094"/>
<dbReference type="GO" id="GO:0005829">
    <property type="term" value="C:cytosol"/>
    <property type="evidence" value="ECO:0007669"/>
    <property type="project" value="TreeGrafter"/>
</dbReference>
<dbReference type="GO" id="GO:0016020">
    <property type="term" value="C:membrane"/>
    <property type="evidence" value="ECO:0007669"/>
    <property type="project" value="GOC"/>
</dbReference>
<dbReference type="GO" id="GO:0000035">
    <property type="term" value="F:acyl binding"/>
    <property type="evidence" value="ECO:0007669"/>
    <property type="project" value="TreeGrafter"/>
</dbReference>
<dbReference type="GO" id="GO:0000036">
    <property type="term" value="F:acyl carrier activity"/>
    <property type="evidence" value="ECO:0007669"/>
    <property type="project" value="UniProtKB-UniRule"/>
</dbReference>
<dbReference type="GO" id="GO:0009245">
    <property type="term" value="P:lipid A biosynthetic process"/>
    <property type="evidence" value="ECO:0007669"/>
    <property type="project" value="TreeGrafter"/>
</dbReference>
<dbReference type="FunFam" id="1.10.1200.10:FF:000001">
    <property type="entry name" value="Acyl carrier protein"/>
    <property type="match status" value="1"/>
</dbReference>
<dbReference type="Gene3D" id="1.10.1200.10">
    <property type="entry name" value="ACP-like"/>
    <property type="match status" value="1"/>
</dbReference>
<dbReference type="HAMAP" id="MF_01217">
    <property type="entry name" value="Acyl_carrier"/>
    <property type="match status" value="1"/>
</dbReference>
<dbReference type="InterPro" id="IPR003231">
    <property type="entry name" value="ACP"/>
</dbReference>
<dbReference type="InterPro" id="IPR036736">
    <property type="entry name" value="ACP-like_sf"/>
</dbReference>
<dbReference type="InterPro" id="IPR009081">
    <property type="entry name" value="PP-bd_ACP"/>
</dbReference>
<dbReference type="InterPro" id="IPR006162">
    <property type="entry name" value="Ppantetheine_attach_site"/>
</dbReference>
<dbReference type="NCBIfam" id="TIGR00517">
    <property type="entry name" value="acyl_carrier"/>
    <property type="match status" value="1"/>
</dbReference>
<dbReference type="NCBIfam" id="NF002148">
    <property type="entry name" value="PRK00982.1-2"/>
    <property type="match status" value="1"/>
</dbReference>
<dbReference type="NCBIfam" id="NF002150">
    <property type="entry name" value="PRK00982.1-4"/>
    <property type="match status" value="1"/>
</dbReference>
<dbReference type="NCBIfam" id="NF002151">
    <property type="entry name" value="PRK00982.1-5"/>
    <property type="match status" value="1"/>
</dbReference>
<dbReference type="PANTHER" id="PTHR20863">
    <property type="entry name" value="ACYL CARRIER PROTEIN"/>
    <property type="match status" value="1"/>
</dbReference>
<dbReference type="PANTHER" id="PTHR20863:SF76">
    <property type="entry name" value="CARRIER DOMAIN-CONTAINING PROTEIN"/>
    <property type="match status" value="1"/>
</dbReference>
<dbReference type="Pfam" id="PF00550">
    <property type="entry name" value="PP-binding"/>
    <property type="match status" value="1"/>
</dbReference>
<dbReference type="SUPFAM" id="SSF47336">
    <property type="entry name" value="ACP-like"/>
    <property type="match status" value="1"/>
</dbReference>
<dbReference type="PROSITE" id="PS50075">
    <property type="entry name" value="CARRIER"/>
    <property type="match status" value="1"/>
</dbReference>
<dbReference type="PROSITE" id="PS00012">
    <property type="entry name" value="PHOSPHOPANTETHEINE"/>
    <property type="match status" value="1"/>
</dbReference>
<keyword id="KW-0963">Cytoplasm</keyword>
<keyword id="KW-0275">Fatty acid biosynthesis</keyword>
<keyword id="KW-0276">Fatty acid metabolism</keyword>
<keyword id="KW-0444">Lipid biosynthesis</keyword>
<keyword id="KW-0443">Lipid metabolism</keyword>
<keyword id="KW-0596">Phosphopantetheine</keyword>
<keyword id="KW-0597">Phosphoprotein</keyword>
<name>ACP_STAA1</name>
<feature type="chain" id="PRO_1000066697" description="Acyl carrier protein">
    <location>
        <begin position="1"/>
        <end position="77"/>
    </location>
</feature>
<feature type="domain" description="Carrier" evidence="2">
    <location>
        <begin position="1"/>
        <end position="76"/>
    </location>
</feature>
<feature type="modified residue" description="O-(pantetheine 4'-phosphoryl)serine" evidence="2">
    <location>
        <position position="36"/>
    </location>
</feature>
<gene>
    <name evidence="1" type="primary">acpP</name>
    <name type="ordered locus">SAHV_1222</name>
</gene>
<organism>
    <name type="scientific">Staphylococcus aureus (strain Mu3 / ATCC 700698)</name>
    <dbReference type="NCBI Taxonomy" id="418127"/>
    <lineage>
        <taxon>Bacteria</taxon>
        <taxon>Bacillati</taxon>
        <taxon>Bacillota</taxon>
        <taxon>Bacilli</taxon>
        <taxon>Bacillales</taxon>
        <taxon>Staphylococcaceae</taxon>
        <taxon>Staphylococcus</taxon>
    </lineage>
</organism>
<accession>A7X1J8</accession>
<evidence type="ECO:0000255" key="1">
    <source>
        <dbReference type="HAMAP-Rule" id="MF_01217"/>
    </source>
</evidence>
<evidence type="ECO:0000255" key="2">
    <source>
        <dbReference type="PROSITE-ProRule" id="PRU00258"/>
    </source>
</evidence>
<proteinExistence type="inferred from homology"/>